<reference key="1">
    <citation type="journal article" date="2005" name="Proc. Natl. Acad. Sci. U.S.A.">
        <title>Complete genome sequencing of Anaplasma marginale reveals that the surface is skewed to two superfamilies of outer membrane proteins.</title>
        <authorList>
            <person name="Brayton K.A."/>
            <person name="Kappmeyer L.S."/>
            <person name="Herndon D.R."/>
            <person name="Dark M.J."/>
            <person name="Tibbals D.L."/>
            <person name="Palmer G.H."/>
            <person name="McGuire T.C."/>
            <person name="Knowles D.P. Jr."/>
        </authorList>
    </citation>
    <scope>NUCLEOTIDE SEQUENCE [LARGE SCALE GENOMIC DNA]</scope>
    <source>
        <strain>St. Maries</strain>
    </source>
</reference>
<evidence type="ECO:0000255" key="1">
    <source>
        <dbReference type="HAMAP-Rule" id="MF_00600"/>
    </source>
</evidence>
<sequence>MANVVVTGEALDKSIREVVRILEDAVGCTAGPKGLTVAISKPYGSPEITKDGYKVMKSIKPEEPLAVAIANIITQSASQCNDKVGDGTTTCSILTAKVIEEVSRAKAAGADTISIKNGILKAKEAVLTALLSMKREVASEDEIAQVATISANGDKNIGGKIAQCVREVGKDGVITVEESKGFKDLEVERTDGMQFDRGYLSPYFVTNAEKMLVEFENPYIFLTEKKINLVQSILPVLENVARSGRPLLIIAEDVEGEALSTLVLNKLRGGLQVAAVKAPGFGDRRKDMLGDIAVIAGAKYVVNDELAVKVEDITLDDLGTAKTVRITKDTTTIIGSVDSNADSITSRISQIKSQIEVSSSDYDKEKLKERLAKLSGGVAVLKVGGSSEVEVKERKDRVEDALHATRAAVEEGVVPGGGAALLYTLASLDGIKGKNDDEQLGINIIKRAVCAPIKRIIKNSGSEEAPCVIQHLMKQNDKELIFNVDTMNYANAFASGVMDPLKVVRIAFDLAVSLAAVFMTLNAVVVDVPSKEDTAGGGAAGGMGGMGGF</sequence>
<proteinExistence type="inferred from homology"/>
<comment type="function">
    <text evidence="1">Together with its co-chaperonin GroES, plays an essential role in assisting protein folding. The GroEL-GroES system forms a nano-cage that allows encapsulation of the non-native substrate proteins and provides a physical environment optimized to promote and accelerate protein folding.</text>
</comment>
<comment type="catalytic activity">
    <reaction evidence="1">
        <text>ATP + H2O + a folded polypeptide = ADP + phosphate + an unfolded polypeptide.</text>
        <dbReference type="EC" id="5.6.1.7"/>
    </reaction>
</comment>
<comment type="subunit">
    <text evidence="1">Forms a cylinder of 14 subunits composed of two heptameric rings stacked back-to-back. Interacts with the co-chaperonin GroES.</text>
</comment>
<comment type="subcellular location">
    <subcellularLocation>
        <location evidence="1">Cytoplasm</location>
    </subcellularLocation>
</comment>
<comment type="similarity">
    <text evidence="1">Belongs to the chaperonin (HSP60) family.</text>
</comment>
<name>CH60_ANAMM</name>
<accession>Q5PA30</accession>
<feature type="chain" id="PRO_0000063259" description="Chaperonin GroEL">
    <location>
        <begin position="1"/>
        <end position="549"/>
    </location>
</feature>
<feature type="binding site" evidence="1">
    <location>
        <begin position="29"/>
        <end position="32"/>
    </location>
    <ligand>
        <name>ATP</name>
        <dbReference type="ChEBI" id="CHEBI:30616"/>
    </ligand>
</feature>
<feature type="binding site" evidence="1">
    <location>
        <position position="50"/>
    </location>
    <ligand>
        <name>ATP</name>
        <dbReference type="ChEBI" id="CHEBI:30616"/>
    </ligand>
</feature>
<feature type="binding site" evidence="1">
    <location>
        <begin position="86"/>
        <end position="90"/>
    </location>
    <ligand>
        <name>ATP</name>
        <dbReference type="ChEBI" id="CHEBI:30616"/>
    </ligand>
</feature>
<feature type="binding site" evidence="1">
    <location>
        <position position="417"/>
    </location>
    <ligand>
        <name>ATP</name>
        <dbReference type="ChEBI" id="CHEBI:30616"/>
    </ligand>
</feature>
<feature type="binding site" evidence="1">
    <location>
        <position position="499"/>
    </location>
    <ligand>
        <name>ATP</name>
        <dbReference type="ChEBI" id="CHEBI:30616"/>
    </ligand>
</feature>
<organism>
    <name type="scientific">Anaplasma marginale (strain St. Maries)</name>
    <dbReference type="NCBI Taxonomy" id="234826"/>
    <lineage>
        <taxon>Bacteria</taxon>
        <taxon>Pseudomonadati</taxon>
        <taxon>Pseudomonadota</taxon>
        <taxon>Alphaproteobacteria</taxon>
        <taxon>Rickettsiales</taxon>
        <taxon>Anaplasmataceae</taxon>
        <taxon>Anaplasma</taxon>
    </lineage>
</organism>
<gene>
    <name evidence="1" type="primary">groEL</name>
    <name evidence="1" type="synonym">groL</name>
    <name type="ordered locus">AM944</name>
</gene>
<keyword id="KW-0067">ATP-binding</keyword>
<keyword id="KW-0143">Chaperone</keyword>
<keyword id="KW-0963">Cytoplasm</keyword>
<keyword id="KW-0413">Isomerase</keyword>
<keyword id="KW-0547">Nucleotide-binding</keyword>
<dbReference type="EC" id="5.6.1.7" evidence="1"/>
<dbReference type="EMBL" id="CP000030">
    <property type="protein sequence ID" value="AAV86850.1"/>
    <property type="molecule type" value="Genomic_DNA"/>
</dbReference>
<dbReference type="RefSeq" id="WP_010265648.1">
    <property type="nucleotide sequence ID" value="NZ_AFMU01000010.1"/>
</dbReference>
<dbReference type="SMR" id="Q5PA30"/>
<dbReference type="GeneID" id="7397906"/>
<dbReference type="KEGG" id="ama:AM944"/>
<dbReference type="HOGENOM" id="CLU_016503_3_0_5"/>
<dbReference type="GO" id="GO:0005737">
    <property type="term" value="C:cytoplasm"/>
    <property type="evidence" value="ECO:0007669"/>
    <property type="project" value="UniProtKB-SubCell"/>
</dbReference>
<dbReference type="GO" id="GO:0005524">
    <property type="term" value="F:ATP binding"/>
    <property type="evidence" value="ECO:0007669"/>
    <property type="project" value="UniProtKB-UniRule"/>
</dbReference>
<dbReference type="GO" id="GO:0140662">
    <property type="term" value="F:ATP-dependent protein folding chaperone"/>
    <property type="evidence" value="ECO:0007669"/>
    <property type="project" value="InterPro"/>
</dbReference>
<dbReference type="GO" id="GO:0016853">
    <property type="term" value="F:isomerase activity"/>
    <property type="evidence" value="ECO:0007669"/>
    <property type="project" value="UniProtKB-KW"/>
</dbReference>
<dbReference type="GO" id="GO:0051082">
    <property type="term" value="F:unfolded protein binding"/>
    <property type="evidence" value="ECO:0007669"/>
    <property type="project" value="UniProtKB-UniRule"/>
</dbReference>
<dbReference type="GO" id="GO:0042026">
    <property type="term" value="P:protein refolding"/>
    <property type="evidence" value="ECO:0007669"/>
    <property type="project" value="UniProtKB-UniRule"/>
</dbReference>
<dbReference type="CDD" id="cd03344">
    <property type="entry name" value="GroEL"/>
    <property type="match status" value="1"/>
</dbReference>
<dbReference type="FunFam" id="3.50.7.10:FF:000001">
    <property type="entry name" value="60 kDa chaperonin"/>
    <property type="match status" value="1"/>
</dbReference>
<dbReference type="Gene3D" id="3.50.7.10">
    <property type="entry name" value="GroEL"/>
    <property type="match status" value="1"/>
</dbReference>
<dbReference type="Gene3D" id="1.10.560.10">
    <property type="entry name" value="GroEL-like equatorial domain"/>
    <property type="match status" value="1"/>
</dbReference>
<dbReference type="Gene3D" id="3.30.260.10">
    <property type="entry name" value="TCP-1-like chaperonin intermediate domain"/>
    <property type="match status" value="1"/>
</dbReference>
<dbReference type="HAMAP" id="MF_00600">
    <property type="entry name" value="CH60"/>
    <property type="match status" value="1"/>
</dbReference>
<dbReference type="InterPro" id="IPR018370">
    <property type="entry name" value="Chaperonin_Cpn60_CS"/>
</dbReference>
<dbReference type="InterPro" id="IPR001844">
    <property type="entry name" value="Cpn60/GroEL"/>
</dbReference>
<dbReference type="InterPro" id="IPR002423">
    <property type="entry name" value="Cpn60/GroEL/TCP-1"/>
</dbReference>
<dbReference type="InterPro" id="IPR027409">
    <property type="entry name" value="GroEL-like_apical_dom_sf"/>
</dbReference>
<dbReference type="InterPro" id="IPR027413">
    <property type="entry name" value="GROEL-like_equatorial_sf"/>
</dbReference>
<dbReference type="InterPro" id="IPR027410">
    <property type="entry name" value="TCP-1-like_intermed_sf"/>
</dbReference>
<dbReference type="NCBIfam" id="TIGR02348">
    <property type="entry name" value="GroEL"/>
    <property type="match status" value="1"/>
</dbReference>
<dbReference type="NCBIfam" id="NF000592">
    <property type="entry name" value="PRK00013.1"/>
    <property type="match status" value="1"/>
</dbReference>
<dbReference type="NCBIfam" id="NF009487">
    <property type="entry name" value="PRK12849.1"/>
    <property type="match status" value="1"/>
</dbReference>
<dbReference type="NCBIfam" id="NF009488">
    <property type="entry name" value="PRK12850.1"/>
    <property type="match status" value="1"/>
</dbReference>
<dbReference type="NCBIfam" id="NF009489">
    <property type="entry name" value="PRK12851.1"/>
    <property type="match status" value="1"/>
</dbReference>
<dbReference type="PANTHER" id="PTHR45633">
    <property type="entry name" value="60 KDA HEAT SHOCK PROTEIN, MITOCHONDRIAL"/>
    <property type="match status" value="1"/>
</dbReference>
<dbReference type="Pfam" id="PF00118">
    <property type="entry name" value="Cpn60_TCP1"/>
    <property type="match status" value="1"/>
</dbReference>
<dbReference type="PRINTS" id="PR00298">
    <property type="entry name" value="CHAPERONIN60"/>
</dbReference>
<dbReference type="SUPFAM" id="SSF52029">
    <property type="entry name" value="GroEL apical domain-like"/>
    <property type="match status" value="1"/>
</dbReference>
<dbReference type="SUPFAM" id="SSF48592">
    <property type="entry name" value="GroEL equatorial domain-like"/>
    <property type="match status" value="1"/>
</dbReference>
<dbReference type="SUPFAM" id="SSF54849">
    <property type="entry name" value="GroEL-intermediate domain like"/>
    <property type="match status" value="1"/>
</dbReference>
<dbReference type="PROSITE" id="PS00296">
    <property type="entry name" value="CHAPERONINS_CPN60"/>
    <property type="match status" value="1"/>
</dbReference>
<protein>
    <recommendedName>
        <fullName evidence="1">Chaperonin GroEL</fullName>
        <ecNumber evidence="1">5.6.1.7</ecNumber>
    </recommendedName>
    <alternativeName>
        <fullName evidence="1">60 kDa chaperonin</fullName>
    </alternativeName>
    <alternativeName>
        <fullName evidence="1">Chaperonin-60</fullName>
        <shortName evidence="1">Cpn60</shortName>
    </alternativeName>
</protein>